<reference key="1">
    <citation type="journal article" date="2009" name="J. Bacteriol.">
        <title>The genome of Thermosipho africanus TCF52B: lateral genetic connections to the Firmicutes and Archaea.</title>
        <authorList>
            <person name="Nesboe C.L."/>
            <person name="Bapteste E."/>
            <person name="Curtis B."/>
            <person name="Dahle H."/>
            <person name="Lopez P."/>
            <person name="Macleod D."/>
            <person name="Dlutek M."/>
            <person name="Bowman S."/>
            <person name="Zhaxybayeva O."/>
            <person name="Birkeland N.-K."/>
            <person name="Doolittle W.F."/>
        </authorList>
    </citation>
    <scope>NUCLEOTIDE SEQUENCE [LARGE SCALE GENOMIC DNA]</scope>
    <source>
        <strain>TCF52B</strain>
    </source>
</reference>
<proteinExistence type="inferred from homology"/>
<sequence length="293" mass="32446">MFISEKVQKALEENKPIVALESTVIAHGLPYPENLKVAQEFEDIVYENGCVPATIGILKGKVIVGLSKEQLIELVDDNPIKVGTREISYAIAMKKSAATTVSSTAKIASLAGIKVFATGGIGGVHRGEWDVSQDIIELSKTNIIVVSAGCKSILDIKKTLEFLETFQVLTVGYKTEYFPIFYNRLSKEKIYKVENADEIANIFNEKNKLKLESAILVANPIPEDYVLDNNEIEGYIKTIEKEIAEKDIHGKEVTPYMLKRLVELSNGKTLESNIVLLKNNVELACKIAQSLKK</sequence>
<name>PSUG_THEAB</name>
<keyword id="KW-0326">Glycosidase</keyword>
<keyword id="KW-0378">Hydrolase</keyword>
<keyword id="KW-0456">Lyase</keyword>
<keyword id="KW-0464">Manganese</keyword>
<keyword id="KW-0479">Metal-binding</keyword>
<keyword id="KW-1185">Reference proteome</keyword>
<protein>
    <recommendedName>
        <fullName evidence="1">Pseudouridine-5'-phosphate glycosidase</fullName>
        <shortName evidence="1">PsiMP glycosidase</shortName>
        <ecNumber evidence="1">4.2.1.70</ecNumber>
    </recommendedName>
</protein>
<organism>
    <name type="scientific">Thermosipho africanus (strain TCF52B)</name>
    <dbReference type="NCBI Taxonomy" id="484019"/>
    <lineage>
        <taxon>Bacteria</taxon>
        <taxon>Thermotogati</taxon>
        <taxon>Thermotogota</taxon>
        <taxon>Thermotogae</taxon>
        <taxon>Thermotogales</taxon>
        <taxon>Fervidobacteriaceae</taxon>
        <taxon>Thermosipho</taxon>
    </lineage>
</organism>
<accession>B7ID34</accession>
<evidence type="ECO:0000255" key="1">
    <source>
        <dbReference type="HAMAP-Rule" id="MF_01876"/>
    </source>
</evidence>
<dbReference type="EC" id="4.2.1.70" evidence="1"/>
<dbReference type="EMBL" id="CP001185">
    <property type="protein sequence ID" value="ACJ75911.1"/>
    <property type="molecule type" value="Genomic_DNA"/>
</dbReference>
<dbReference type="RefSeq" id="WP_012580244.1">
    <property type="nucleotide sequence ID" value="NC_011653.1"/>
</dbReference>
<dbReference type="SMR" id="B7ID34"/>
<dbReference type="STRING" id="484019.THA_1468"/>
<dbReference type="KEGG" id="taf:THA_1468"/>
<dbReference type="eggNOG" id="COG2313">
    <property type="taxonomic scope" value="Bacteria"/>
</dbReference>
<dbReference type="HOGENOM" id="CLU_012201_0_1_0"/>
<dbReference type="OrthoDB" id="9805870at2"/>
<dbReference type="Proteomes" id="UP000002453">
    <property type="component" value="Chromosome"/>
</dbReference>
<dbReference type="GO" id="GO:0005737">
    <property type="term" value="C:cytoplasm"/>
    <property type="evidence" value="ECO:0007669"/>
    <property type="project" value="TreeGrafter"/>
</dbReference>
<dbReference type="GO" id="GO:0016798">
    <property type="term" value="F:hydrolase activity, acting on glycosyl bonds"/>
    <property type="evidence" value="ECO:0007669"/>
    <property type="project" value="UniProtKB-KW"/>
</dbReference>
<dbReference type="GO" id="GO:0046872">
    <property type="term" value="F:metal ion binding"/>
    <property type="evidence" value="ECO:0007669"/>
    <property type="project" value="UniProtKB-KW"/>
</dbReference>
<dbReference type="GO" id="GO:0004730">
    <property type="term" value="F:pseudouridylate synthase activity"/>
    <property type="evidence" value="ECO:0007669"/>
    <property type="project" value="UniProtKB-UniRule"/>
</dbReference>
<dbReference type="GO" id="GO:0046113">
    <property type="term" value="P:nucleobase catabolic process"/>
    <property type="evidence" value="ECO:0007669"/>
    <property type="project" value="UniProtKB-UniRule"/>
</dbReference>
<dbReference type="Gene3D" id="3.40.1790.10">
    <property type="entry name" value="Indigoidine synthase domain"/>
    <property type="match status" value="1"/>
</dbReference>
<dbReference type="HAMAP" id="MF_01876">
    <property type="entry name" value="PsiMP_glycosidase"/>
    <property type="match status" value="1"/>
</dbReference>
<dbReference type="InterPro" id="IPR022830">
    <property type="entry name" value="Indigdn_synthA-like"/>
</dbReference>
<dbReference type="InterPro" id="IPR007342">
    <property type="entry name" value="PsuG"/>
</dbReference>
<dbReference type="PANTHER" id="PTHR42909:SF1">
    <property type="entry name" value="CARBOHYDRATE KINASE PFKB DOMAIN-CONTAINING PROTEIN"/>
    <property type="match status" value="1"/>
</dbReference>
<dbReference type="PANTHER" id="PTHR42909">
    <property type="entry name" value="ZGC:136858"/>
    <property type="match status" value="1"/>
</dbReference>
<dbReference type="Pfam" id="PF04227">
    <property type="entry name" value="Indigoidine_A"/>
    <property type="match status" value="1"/>
</dbReference>
<dbReference type="SUPFAM" id="SSF110581">
    <property type="entry name" value="Indigoidine synthase A-like"/>
    <property type="match status" value="1"/>
</dbReference>
<comment type="function">
    <text evidence="1">Catalyzes the reversible cleavage of pseudouridine 5'-phosphate (PsiMP) to ribose 5-phosphate and uracil. Functions biologically in the cleavage direction, as part of a pseudouridine degradation pathway.</text>
</comment>
<comment type="catalytic activity">
    <reaction evidence="1">
        <text>D-ribose 5-phosphate + uracil = psi-UMP + H2O</text>
        <dbReference type="Rhea" id="RHEA:18337"/>
        <dbReference type="ChEBI" id="CHEBI:15377"/>
        <dbReference type="ChEBI" id="CHEBI:17568"/>
        <dbReference type="ChEBI" id="CHEBI:58380"/>
        <dbReference type="ChEBI" id="CHEBI:78346"/>
        <dbReference type="EC" id="4.2.1.70"/>
    </reaction>
</comment>
<comment type="cofactor">
    <cofactor evidence="1">
        <name>Mn(2+)</name>
        <dbReference type="ChEBI" id="CHEBI:29035"/>
    </cofactor>
    <text evidence="1">Binds 1 Mn(2+) ion per subunit.</text>
</comment>
<comment type="subunit">
    <text evidence="1">Homotrimer.</text>
</comment>
<comment type="similarity">
    <text evidence="1">Belongs to the pseudouridine-5'-phosphate glycosidase family.</text>
</comment>
<feature type="chain" id="PRO_0000390553" description="Pseudouridine-5'-phosphate glycosidase">
    <location>
        <begin position="1"/>
        <end position="293"/>
    </location>
</feature>
<feature type="active site" description="Proton donor" evidence="1">
    <location>
        <position position="21"/>
    </location>
</feature>
<feature type="active site" description="Nucleophile" evidence="1">
    <location>
        <position position="151"/>
    </location>
</feature>
<feature type="binding site" evidence="1">
    <location>
        <position position="81"/>
    </location>
    <ligand>
        <name>substrate</name>
    </ligand>
</feature>
<feature type="binding site" evidence="1">
    <location>
        <position position="101"/>
    </location>
    <ligand>
        <name>substrate</name>
    </ligand>
</feature>
<feature type="binding site" evidence="1">
    <location>
        <position position="130"/>
    </location>
    <ligand>
        <name>Mn(2+)</name>
        <dbReference type="ChEBI" id="CHEBI:29035"/>
    </ligand>
</feature>
<feature type="binding site" evidence="1">
    <location>
        <begin position="132"/>
        <end position="134"/>
    </location>
    <ligand>
        <name>substrate</name>
    </ligand>
</feature>
<gene>
    <name evidence="1" type="primary">psuG</name>
    <name type="ordered locus">THA_1468</name>
</gene>